<feature type="chain" id="PRO_1000142931" description="Large ribosomal subunit protein uL16">
    <location>
        <begin position="1"/>
        <end position="138"/>
    </location>
</feature>
<feature type="region of interest" description="Disordered" evidence="2">
    <location>
        <begin position="1"/>
        <end position="20"/>
    </location>
</feature>
<feature type="compositionally biased region" description="Basic residues" evidence="2">
    <location>
        <begin position="1"/>
        <end position="15"/>
    </location>
</feature>
<proteinExistence type="inferred from homology"/>
<comment type="function">
    <text evidence="1">Binds 23S rRNA and is also seen to make contacts with the A and possibly P site tRNAs.</text>
</comment>
<comment type="subunit">
    <text evidence="1">Part of the 50S ribosomal subunit.</text>
</comment>
<comment type="similarity">
    <text evidence="1">Belongs to the universal ribosomal protein uL16 family.</text>
</comment>
<evidence type="ECO:0000255" key="1">
    <source>
        <dbReference type="HAMAP-Rule" id="MF_01342"/>
    </source>
</evidence>
<evidence type="ECO:0000256" key="2">
    <source>
        <dbReference type="SAM" id="MobiDB-lite"/>
    </source>
</evidence>
<evidence type="ECO:0000305" key="3"/>
<sequence>MLSPKKVKYRKKQRGRLSGEAHKGNKISFGEYGLVSLDTYFITARQIEAARVAMTRRVKRGGKVWIRIFPDVPYTKKPAETRMGKGKGGVDHWNAPVKIGTVMFEMAGVPRELAEAAMMLASSKLPVKTTFVVRRDLR</sequence>
<protein>
    <recommendedName>
        <fullName evidence="1">Large ribosomal subunit protein uL16</fullName>
    </recommendedName>
    <alternativeName>
        <fullName evidence="3">50S ribosomal protein L16</fullName>
    </alternativeName>
</protein>
<reference key="1">
    <citation type="submission" date="2004-12" db="EMBL/GenBank/DDBJ databases">
        <title>The genome sequence of Borrelia hermsii and Borrelia turicatae: comparative analysis of two agents of endemic N. America relapsing fever.</title>
        <authorList>
            <person name="Porcella S.F."/>
            <person name="Raffel S.J."/>
            <person name="Schrumpf M.E."/>
            <person name="Montgomery B."/>
            <person name="Smith T."/>
            <person name="Schwan T.G."/>
        </authorList>
    </citation>
    <scope>NUCLEOTIDE SEQUENCE [LARGE SCALE GENOMIC DNA]</scope>
    <source>
        <strain>HS1 / DAH</strain>
    </source>
</reference>
<organism>
    <name type="scientific">Borrelia hermsii (strain HS1 / DAH)</name>
    <dbReference type="NCBI Taxonomy" id="314723"/>
    <lineage>
        <taxon>Bacteria</taxon>
        <taxon>Pseudomonadati</taxon>
        <taxon>Spirochaetota</taxon>
        <taxon>Spirochaetia</taxon>
        <taxon>Spirochaetales</taxon>
        <taxon>Borreliaceae</taxon>
        <taxon>Borrelia</taxon>
    </lineage>
</organism>
<gene>
    <name evidence="1" type="primary">rplP</name>
    <name type="ordered locus">BH0485</name>
</gene>
<accession>B2S0I8</accession>
<name>RL16_BORHD</name>
<dbReference type="EMBL" id="CP000048">
    <property type="protein sequence ID" value="AAX16994.1"/>
    <property type="molecule type" value="Genomic_DNA"/>
</dbReference>
<dbReference type="RefSeq" id="WP_012422248.1">
    <property type="nucleotide sequence ID" value="NZ_CP073136.1"/>
</dbReference>
<dbReference type="SMR" id="B2S0I8"/>
<dbReference type="GeneID" id="71843303"/>
<dbReference type="KEGG" id="bhr:BH0485"/>
<dbReference type="HOGENOM" id="CLU_078858_2_1_12"/>
<dbReference type="Proteomes" id="UP000008834">
    <property type="component" value="Chromosome"/>
</dbReference>
<dbReference type="GO" id="GO:0022625">
    <property type="term" value="C:cytosolic large ribosomal subunit"/>
    <property type="evidence" value="ECO:0007669"/>
    <property type="project" value="TreeGrafter"/>
</dbReference>
<dbReference type="GO" id="GO:0019843">
    <property type="term" value="F:rRNA binding"/>
    <property type="evidence" value="ECO:0007669"/>
    <property type="project" value="UniProtKB-UniRule"/>
</dbReference>
<dbReference type="GO" id="GO:0003735">
    <property type="term" value="F:structural constituent of ribosome"/>
    <property type="evidence" value="ECO:0007669"/>
    <property type="project" value="InterPro"/>
</dbReference>
<dbReference type="GO" id="GO:0000049">
    <property type="term" value="F:tRNA binding"/>
    <property type="evidence" value="ECO:0007669"/>
    <property type="project" value="UniProtKB-KW"/>
</dbReference>
<dbReference type="GO" id="GO:0006412">
    <property type="term" value="P:translation"/>
    <property type="evidence" value="ECO:0007669"/>
    <property type="project" value="UniProtKB-UniRule"/>
</dbReference>
<dbReference type="CDD" id="cd01433">
    <property type="entry name" value="Ribosomal_L16_L10e"/>
    <property type="match status" value="1"/>
</dbReference>
<dbReference type="FunFam" id="3.90.1170.10:FF:000001">
    <property type="entry name" value="50S ribosomal protein L16"/>
    <property type="match status" value="1"/>
</dbReference>
<dbReference type="Gene3D" id="3.90.1170.10">
    <property type="entry name" value="Ribosomal protein L10e/L16"/>
    <property type="match status" value="1"/>
</dbReference>
<dbReference type="HAMAP" id="MF_01342">
    <property type="entry name" value="Ribosomal_uL16"/>
    <property type="match status" value="1"/>
</dbReference>
<dbReference type="InterPro" id="IPR047873">
    <property type="entry name" value="Ribosomal_uL16"/>
</dbReference>
<dbReference type="InterPro" id="IPR000114">
    <property type="entry name" value="Ribosomal_uL16_bact-type"/>
</dbReference>
<dbReference type="InterPro" id="IPR020798">
    <property type="entry name" value="Ribosomal_uL16_CS"/>
</dbReference>
<dbReference type="InterPro" id="IPR016180">
    <property type="entry name" value="Ribosomal_uL16_dom"/>
</dbReference>
<dbReference type="InterPro" id="IPR036920">
    <property type="entry name" value="Ribosomal_uL16_sf"/>
</dbReference>
<dbReference type="NCBIfam" id="TIGR01164">
    <property type="entry name" value="rplP_bact"/>
    <property type="match status" value="1"/>
</dbReference>
<dbReference type="PANTHER" id="PTHR12220">
    <property type="entry name" value="50S/60S RIBOSOMAL PROTEIN L16"/>
    <property type="match status" value="1"/>
</dbReference>
<dbReference type="PANTHER" id="PTHR12220:SF13">
    <property type="entry name" value="LARGE RIBOSOMAL SUBUNIT PROTEIN UL16M"/>
    <property type="match status" value="1"/>
</dbReference>
<dbReference type="Pfam" id="PF00252">
    <property type="entry name" value="Ribosomal_L16"/>
    <property type="match status" value="1"/>
</dbReference>
<dbReference type="PRINTS" id="PR00060">
    <property type="entry name" value="RIBOSOMALL16"/>
</dbReference>
<dbReference type="SUPFAM" id="SSF54686">
    <property type="entry name" value="Ribosomal protein L16p/L10e"/>
    <property type="match status" value="1"/>
</dbReference>
<dbReference type="PROSITE" id="PS00586">
    <property type="entry name" value="RIBOSOMAL_L16_1"/>
    <property type="match status" value="1"/>
</dbReference>
<dbReference type="PROSITE" id="PS00701">
    <property type="entry name" value="RIBOSOMAL_L16_2"/>
    <property type="match status" value="1"/>
</dbReference>
<keyword id="KW-0687">Ribonucleoprotein</keyword>
<keyword id="KW-0689">Ribosomal protein</keyword>
<keyword id="KW-0694">RNA-binding</keyword>
<keyword id="KW-0699">rRNA-binding</keyword>
<keyword id="KW-0820">tRNA-binding</keyword>